<keyword id="KW-0025">Alternative splicing</keyword>
<keyword id="KW-0036">Amyotrophic lateral sclerosis</keyword>
<keyword id="KW-0966">Cell projection</keyword>
<keyword id="KW-0144">Charcot-Marie-Tooth disease</keyword>
<keyword id="KW-0963">Cytoplasm</keyword>
<keyword id="KW-0890">Hereditary spastic paraplegia</keyword>
<keyword id="KW-0523">Neurodegeneration</keyword>
<keyword id="KW-0622">Neuropathy</keyword>
<keyword id="KW-0539">Nucleus</keyword>
<keyword id="KW-0597">Phosphoprotein</keyword>
<keyword id="KW-1267">Proteomics identification</keyword>
<keyword id="KW-1185">Reference proteome</keyword>
<reference key="1">
    <citation type="journal article" date="2001" name="DNA Res.">
        <title>Prediction of the coding sequences of unidentified human genes. XX. The complete sequences of 100 new cDNA clones from brain which code for large proteins in vitro.</title>
        <authorList>
            <person name="Nagase T."/>
            <person name="Nakayama M."/>
            <person name="Nakajima D."/>
            <person name="Kikuno R."/>
            <person name="Ohara O."/>
        </authorList>
    </citation>
    <scope>NUCLEOTIDE SEQUENCE [LARGE SCALE MRNA] (ISOFORM 1)</scope>
    <scope>VARIANT SER-463</scope>
    <source>
        <tissue>Brain</tissue>
    </source>
</reference>
<reference key="2">
    <citation type="journal article" date="2002" name="DNA Res.">
        <title>Construction of expression-ready cDNA clones for KIAA genes: manual curation of 330 KIAA cDNA clones.</title>
        <authorList>
            <person name="Nakajima D."/>
            <person name="Okazaki N."/>
            <person name="Yamakawa H."/>
            <person name="Kikuno R."/>
            <person name="Ohara O."/>
            <person name="Nagase T."/>
        </authorList>
    </citation>
    <scope>SEQUENCE REVISION</scope>
</reference>
<reference key="3">
    <citation type="journal article" date="2006" name="Nature">
        <title>Analysis of the DNA sequence and duplication history of human chromosome 15.</title>
        <authorList>
            <person name="Zody M.C."/>
            <person name="Garber M."/>
            <person name="Sharpe T."/>
            <person name="Young S.K."/>
            <person name="Rowen L."/>
            <person name="O'Neill K."/>
            <person name="Whittaker C.A."/>
            <person name="Kamal M."/>
            <person name="Chang J.L."/>
            <person name="Cuomo C.A."/>
            <person name="Dewar K."/>
            <person name="FitzGerald M.G."/>
            <person name="Kodira C.D."/>
            <person name="Madan A."/>
            <person name="Qin S."/>
            <person name="Yang X."/>
            <person name="Abbasi N."/>
            <person name="Abouelleil A."/>
            <person name="Arachchi H.M."/>
            <person name="Baradarani L."/>
            <person name="Birditt B."/>
            <person name="Bloom S."/>
            <person name="Bloom T."/>
            <person name="Borowsky M.L."/>
            <person name="Burke J."/>
            <person name="Butler J."/>
            <person name="Cook A."/>
            <person name="DeArellano K."/>
            <person name="DeCaprio D."/>
            <person name="Dorris L. III"/>
            <person name="Dors M."/>
            <person name="Eichler E.E."/>
            <person name="Engels R."/>
            <person name="Fahey J."/>
            <person name="Fleetwood P."/>
            <person name="Friedman C."/>
            <person name="Gearin G."/>
            <person name="Hall J.L."/>
            <person name="Hensley G."/>
            <person name="Johnson E."/>
            <person name="Jones C."/>
            <person name="Kamat A."/>
            <person name="Kaur A."/>
            <person name="Locke D.P."/>
            <person name="Madan A."/>
            <person name="Munson G."/>
            <person name="Jaffe D.B."/>
            <person name="Lui A."/>
            <person name="Macdonald P."/>
            <person name="Mauceli E."/>
            <person name="Naylor J.W."/>
            <person name="Nesbitt R."/>
            <person name="Nicol R."/>
            <person name="O'Leary S.B."/>
            <person name="Ratcliffe A."/>
            <person name="Rounsley S."/>
            <person name="She X."/>
            <person name="Sneddon K.M.B."/>
            <person name="Stewart S."/>
            <person name="Sougnez C."/>
            <person name="Stone S.M."/>
            <person name="Topham K."/>
            <person name="Vincent D."/>
            <person name="Wang S."/>
            <person name="Zimmer A.R."/>
            <person name="Birren B.W."/>
            <person name="Hood L."/>
            <person name="Lander E.S."/>
            <person name="Nusbaum C."/>
        </authorList>
    </citation>
    <scope>NUCLEOTIDE SEQUENCE [LARGE SCALE GENOMIC DNA]</scope>
</reference>
<reference key="4">
    <citation type="journal article" date="2004" name="Genome Res.">
        <title>The status, quality, and expansion of the NIH full-length cDNA project: the Mammalian Gene Collection (MGC).</title>
        <authorList>
            <consortium name="The MGC Project Team"/>
        </authorList>
    </citation>
    <scope>NUCLEOTIDE SEQUENCE [LARGE SCALE MRNA] (ISOFORMS 1 AND 3)</scope>
    <scope>VARIANT SER-463</scope>
    <source>
        <tissue>Brain</tissue>
        <tissue>Spinal cord</tissue>
        <tissue>Testis</tissue>
        <tissue>Urinary bladder</tissue>
    </source>
</reference>
<reference key="5">
    <citation type="journal article" date="2007" name="BMC Genomics">
        <title>The full-ORF clone resource of the German cDNA consortium.</title>
        <authorList>
            <person name="Bechtel S."/>
            <person name="Rosenfelder H."/>
            <person name="Duda A."/>
            <person name="Schmidt C.P."/>
            <person name="Ernst U."/>
            <person name="Wellenreuther R."/>
            <person name="Mehrle A."/>
            <person name="Schuster C."/>
            <person name="Bahr A."/>
            <person name="Bloecker H."/>
            <person name="Heubner D."/>
            <person name="Hoerlein A."/>
            <person name="Michel G."/>
            <person name="Wedler H."/>
            <person name="Koehrer K."/>
            <person name="Ottenwaelder B."/>
            <person name="Poustka A."/>
            <person name="Wiemann S."/>
            <person name="Schupp I."/>
        </authorList>
    </citation>
    <scope>NUCLEOTIDE SEQUENCE [LARGE SCALE MRNA] OF 84-1205 (ISOFORM 1)</scope>
    <source>
        <tissue>Melanoma</tissue>
    </source>
</reference>
<reference key="6">
    <citation type="journal article" date="2004" name="Nat. Genet.">
        <title>Complete sequencing and characterization of 21,243 full-length human cDNAs.</title>
        <authorList>
            <person name="Ota T."/>
            <person name="Suzuki Y."/>
            <person name="Nishikawa T."/>
            <person name="Otsuki T."/>
            <person name="Sugiyama T."/>
            <person name="Irie R."/>
            <person name="Wakamatsu A."/>
            <person name="Hayashi K."/>
            <person name="Sato H."/>
            <person name="Nagai K."/>
            <person name="Kimura K."/>
            <person name="Makita H."/>
            <person name="Sekine M."/>
            <person name="Obayashi M."/>
            <person name="Nishi T."/>
            <person name="Shibahara T."/>
            <person name="Tanaka T."/>
            <person name="Ishii S."/>
            <person name="Yamamoto J."/>
            <person name="Saito K."/>
            <person name="Kawai Y."/>
            <person name="Isono Y."/>
            <person name="Nakamura Y."/>
            <person name="Nagahari K."/>
            <person name="Murakami K."/>
            <person name="Yasuda T."/>
            <person name="Iwayanagi T."/>
            <person name="Wagatsuma M."/>
            <person name="Shiratori A."/>
            <person name="Sudo H."/>
            <person name="Hosoiri T."/>
            <person name="Kaku Y."/>
            <person name="Kodaira H."/>
            <person name="Kondo H."/>
            <person name="Sugawara M."/>
            <person name="Takahashi M."/>
            <person name="Kanda K."/>
            <person name="Yokoi T."/>
            <person name="Furuya T."/>
            <person name="Kikkawa E."/>
            <person name="Omura Y."/>
            <person name="Abe K."/>
            <person name="Kamihara K."/>
            <person name="Katsuta N."/>
            <person name="Sato K."/>
            <person name="Tanikawa M."/>
            <person name="Yamazaki M."/>
            <person name="Ninomiya K."/>
            <person name="Ishibashi T."/>
            <person name="Yamashita H."/>
            <person name="Murakawa K."/>
            <person name="Fujimori K."/>
            <person name="Tanai H."/>
            <person name="Kimata M."/>
            <person name="Watanabe M."/>
            <person name="Hiraoka S."/>
            <person name="Chiba Y."/>
            <person name="Ishida S."/>
            <person name="Ono Y."/>
            <person name="Takiguchi S."/>
            <person name="Watanabe S."/>
            <person name="Yosida M."/>
            <person name="Hotuta T."/>
            <person name="Kusano J."/>
            <person name="Kanehori K."/>
            <person name="Takahashi-Fujii A."/>
            <person name="Hara H."/>
            <person name="Tanase T.-O."/>
            <person name="Nomura Y."/>
            <person name="Togiya S."/>
            <person name="Komai F."/>
            <person name="Hara R."/>
            <person name="Takeuchi K."/>
            <person name="Arita M."/>
            <person name="Imose N."/>
            <person name="Musashino K."/>
            <person name="Yuuki H."/>
            <person name="Oshima A."/>
            <person name="Sasaki N."/>
            <person name="Aotsuka S."/>
            <person name="Yoshikawa Y."/>
            <person name="Matsunawa H."/>
            <person name="Ichihara T."/>
            <person name="Shiohata N."/>
            <person name="Sano S."/>
            <person name="Moriya S."/>
            <person name="Momiyama H."/>
            <person name="Satoh N."/>
            <person name="Takami S."/>
            <person name="Terashima Y."/>
            <person name="Suzuki O."/>
            <person name="Nakagawa S."/>
            <person name="Senoh A."/>
            <person name="Mizoguchi H."/>
            <person name="Goto Y."/>
            <person name="Shimizu F."/>
            <person name="Wakebe H."/>
            <person name="Hishigaki H."/>
            <person name="Watanabe T."/>
            <person name="Sugiyama A."/>
            <person name="Takemoto M."/>
            <person name="Kawakami B."/>
            <person name="Yamazaki M."/>
            <person name="Watanabe K."/>
            <person name="Kumagai A."/>
            <person name="Itakura S."/>
            <person name="Fukuzumi Y."/>
            <person name="Fujimori Y."/>
            <person name="Komiyama M."/>
            <person name="Tashiro H."/>
            <person name="Tanigami A."/>
            <person name="Fujiwara T."/>
            <person name="Ono T."/>
            <person name="Yamada K."/>
            <person name="Fujii Y."/>
            <person name="Ozaki K."/>
            <person name="Hirao M."/>
            <person name="Ohmori Y."/>
            <person name="Kawabata A."/>
            <person name="Hikiji T."/>
            <person name="Kobatake N."/>
            <person name="Inagaki H."/>
            <person name="Ikema Y."/>
            <person name="Okamoto S."/>
            <person name="Okitani R."/>
            <person name="Kawakami T."/>
            <person name="Noguchi S."/>
            <person name="Itoh T."/>
            <person name="Shigeta K."/>
            <person name="Senba T."/>
            <person name="Matsumura K."/>
            <person name="Nakajima Y."/>
            <person name="Mizuno T."/>
            <person name="Morinaga M."/>
            <person name="Sasaki M."/>
            <person name="Togashi T."/>
            <person name="Oyama M."/>
            <person name="Hata H."/>
            <person name="Watanabe M."/>
            <person name="Komatsu T."/>
            <person name="Mizushima-Sugano J."/>
            <person name="Satoh T."/>
            <person name="Shirai Y."/>
            <person name="Takahashi Y."/>
            <person name="Nakagawa K."/>
            <person name="Okumura K."/>
            <person name="Nagase T."/>
            <person name="Nomura N."/>
            <person name="Kikuchi H."/>
            <person name="Masuho Y."/>
            <person name="Yamashita R."/>
            <person name="Nakai K."/>
            <person name="Yada T."/>
            <person name="Nakamura Y."/>
            <person name="Ohara O."/>
            <person name="Isogai T."/>
            <person name="Sugano S."/>
        </authorList>
    </citation>
    <scope>NUCLEOTIDE SEQUENCE [LARGE SCALE MRNA] OF 1205-2443 (ISOFORM 2)</scope>
    <scope>NUCLEOTIDE SEQUENCE [LARGE SCALE MRNA] OF 1951-2443 (ISOFORM 1)</scope>
    <source>
        <tissue>Colon</tissue>
        <tissue>Tongue</tissue>
    </source>
</reference>
<reference key="7">
    <citation type="submission" date="2005-03" db="EMBL/GenBank/DDBJ databases">
        <title>Isolation of genes which are associated with the colorectal tumor.</title>
        <authorList>
            <person name="Ye F."/>
            <person name="Xiao B."/>
            <person name="Nan Q."/>
        </authorList>
    </citation>
    <scope>NUCLEOTIDE SEQUENCE [MRNA] OF 2386-2443</scope>
    <source>
        <tissue>Intestine</tissue>
    </source>
</reference>
<reference key="8">
    <citation type="journal article" date="2007" name="Nat. Genet.">
        <title>Mutations in SPG11, encoding spatacsin, are a major cause of spastic paraplegia with thin corpus callosum.</title>
        <authorList>
            <person name="Stevanin G."/>
            <person name="Santorelli F.M."/>
            <person name="Azzedine H."/>
            <person name="Coutinho P."/>
            <person name="Chomilier J."/>
            <person name="Denora P.S."/>
            <person name="Martin E."/>
            <person name="Ouvrard-Hernandez A.-M."/>
            <person name="Tessa A."/>
            <person name="Bouslam N."/>
            <person name="Lossos A."/>
            <person name="Charles P."/>
            <person name="Loureiro J.L."/>
            <person name="Elleuch N."/>
            <person name="Confavreux C."/>
            <person name="Cruz V.T."/>
            <person name="Ruberg M."/>
            <person name="Leguern E."/>
            <person name="Grid D."/>
            <person name="Tazir M."/>
            <person name="Fontaine B."/>
            <person name="Filla A."/>
            <person name="Bertini E."/>
            <person name="Durr A."/>
            <person name="Brice A."/>
        </authorList>
    </citation>
    <scope>INVOLVEMENT IN SPG11</scope>
    <scope>SUBCELLULAR LOCATION</scope>
    <scope>TISSUE SPECIFICITY</scope>
</reference>
<reference key="9">
    <citation type="journal article" date="2008" name="Brain">
        <title>Mutations in SPG11 are frequent in autosomal recessive spastic paraplegia with thin corpus callosum, cognitive decline and lower motor neuron degeneration.</title>
        <authorList>
            <consortium name="SPATAX consortium"/>
            <person name="Stevanin G."/>
            <person name="Azzedine H."/>
            <person name="Denora P."/>
            <person name="Boukhris A."/>
            <person name="Tazir M."/>
            <person name="Lossos A."/>
            <person name="Rosa A.L."/>
            <person name="Lerer I."/>
            <person name="Hamri A."/>
            <person name="Alegria P."/>
            <person name="Loureiro J."/>
            <person name="Tada M."/>
            <person name="Hannequin D."/>
            <person name="Anheim M."/>
            <person name="Goizet C."/>
            <person name="Gonzalez-Martinez V."/>
            <person name="Le Ber I."/>
            <person name="Forlani S."/>
            <person name="Iwabuchi K."/>
            <person name="Meiner V."/>
            <person name="Uyanik G."/>
            <person name="Erichsen A.K."/>
            <person name="Feki I."/>
            <person name="Pasquier F."/>
            <person name="Belarbi S."/>
            <person name="Cruz V.T."/>
            <person name="Depienne C."/>
            <person name="Truchetto J."/>
            <person name="Garrigues G."/>
            <person name="Tallaksen C."/>
            <person name="Tranchant C."/>
            <person name="Nishizawa M."/>
            <person name="Vale J."/>
            <person name="Coutinho P."/>
            <person name="Santorelli F.M."/>
            <person name="Mhiri C."/>
            <person name="Brice A."/>
            <person name="Durr A."/>
        </authorList>
    </citation>
    <scope>INVOLVEMENT IN SPG11</scope>
</reference>
<reference key="10">
    <citation type="journal article" date="2008" name="Proc. Natl. Acad. Sci. U.S.A.">
        <title>A quantitative atlas of mitotic phosphorylation.</title>
        <authorList>
            <person name="Dephoure N."/>
            <person name="Zhou C."/>
            <person name="Villen J."/>
            <person name="Beausoleil S.A."/>
            <person name="Bakalarski C.E."/>
            <person name="Elledge S.J."/>
            <person name="Gygi S.P."/>
        </authorList>
    </citation>
    <scope>IDENTIFICATION BY MASS SPECTROMETRY [LARGE SCALE ANALYSIS]</scope>
    <source>
        <tissue>Cervix carcinoma</tissue>
    </source>
</reference>
<reference key="11">
    <citation type="journal article" date="2010" name="Brain">
        <title>SPATACSIN mutations cause autosomal recessive juvenile amyotrophic lateral sclerosis.</title>
        <authorList>
            <person name="Orlacchio A."/>
            <person name="Babalini C."/>
            <person name="Borreca A."/>
            <person name="Patrono C."/>
            <person name="Massa R."/>
            <person name="Basaran S."/>
            <person name="Munhoz R.P."/>
            <person name="Rogaeva E.A."/>
            <person name="St George-Hyslop P.H."/>
            <person name="Bernardi G."/>
            <person name="Kawarai T."/>
        </authorList>
    </citation>
    <scope>INVOLVEMENT IN ALS5</scope>
</reference>
<reference key="12">
    <citation type="journal article" date="2010" name="PLoS Biol.">
        <title>A genome-scale DNA repair RNAi screen identifies SPG48 as a novel gene associated with hereditary spastic paraplegia.</title>
        <authorList>
            <person name="Slabicki M."/>
            <person name="Theis M."/>
            <person name="Krastev D.B."/>
            <person name="Samsonov S."/>
            <person name="Mundwiller E."/>
            <person name="Junqueira M."/>
            <person name="Paszkowski-Rogacz M."/>
            <person name="Teyra J."/>
            <person name="Heninger A.K."/>
            <person name="Poser I."/>
            <person name="Prieur F."/>
            <person name="Truchetto J."/>
            <person name="Confavreux C."/>
            <person name="Marelli C."/>
            <person name="Durr A."/>
            <person name="Camdessanche J.P."/>
            <person name="Brice A."/>
            <person name="Shevchenko A."/>
            <person name="Pisabarro M.T."/>
            <person name="Stevanin G."/>
            <person name="Buchholz F."/>
        </authorList>
    </citation>
    <scope>INTERACTION WITH AP5Z1; AP5B1; AP5S1 AND ZFYVE26</scope>
</reference>
<reference key="13">
    <citation type="journal article" date="2014" name="Hum. Mol. Genet.">
        <title>Dysfunction of spatacsin leads to axonal pathology in SPG11-linked hereditary spastic paraplegia.</title>
        <authorList>
            <person name="Perez-Branguli F."/>
            <person name="Mishra H.K."/>
            <person name="Prots I."/>
            <person name="Havlicek S."/>
            <person name="Kohl Z."/>
            <person name="Saul D."/>
            <person name="Rummel C."/>
            <person name="Dorca-Arevalo J."/>
            <person name="Regensburger M."/>
            <person name="Graef D."/>
            <person name="Sock E."/>
            <person name="Blasi J."/>
            <person name="Groemer T.W."/>
            <person name="Schloetzer-Schrehardt U."/>
            <person name="Winkler J."/>
            <person name="Winner B."/>
        </authorList>
    </citation>
    <scope>FUNCTION</scope>
    <scope>SUBCELLULAR LOCATION</scope>
    <scope>TISSUE SPECIFICITY</scope>
</reference>
<reference key="14">
    <citation type="journal article" date="2014" name="J. Proteomics">
        <title>An enzyme assisted RP-RPLC approach for in-depth analysis of human liver phosphoproteome.</title>
        <authorList>
            <person name="Bian Y."/>
            <person name="Song C."/>
            <person name="Cheng K."/>
            <person name="Dong M."/>
            <person name="Wang F."/>
            <person name="Huang J."/>
            <person name="Sun D."/>
            <person name="Wang L."/>
            <person name="Ye M."/>
            <person name="Zou H."/>
        </authorList>
    </citation>
    <scope>IDENTIFICATION BY MASS SPECTROMETRY [LARGE SCALE ANALYSIS]</scope>
    <source>
        <tissue>Liver</tissue>
    </source>
</reference>
<reference key="15">
    <citation type="journal article" date="2009" name="Hum. Mutat.">
        <title>Screening of ARHSP-TCC patients expands the spectrum of SPG11 mutations and includes a large scale gene deletion.</title>
        <authorList>
            <person name="Denora P.S."/>
            <person name="Schlesinger D."/>
            <person name="Casali C."/>
            <person name="Kok F."/>
            <person name="Tessa A."/>
            <person name="Boukhris A."/>
            <person name="Azzedine H."/>
            <person name="Dotti M.T."/>
            <person name="Bruno C."/>
            <person name="Truchetto J."/>
            <person name="Biancheri R."/>
            <person name="Fedirko E."/>
            <person name="Di Rocco M."/>
            <person name="Bueno C."/>
            <person name="Malandrini A."/>
            <person name="Battini R."/>
            <person name="Sickl E."/>
            <person name="de Leva M.F."/>
            <person name="Boespflug-Tanguy O."/>
            <person name="Silvestri G."/>
            <person name="Simonati A."/>
            <person name="Said E."/>
            <person name="Ferbert A."/>
            <person name="Criscuolo C."/>
            <person name="Heinimann K."/>
            <person name="Modoni A."/>
            <person name="Weber P."/>
            <person name="Palmeri S."/>
            <person name="Plasilova M."/>
            <person name="Pauri F."/>
            <person name="Cassandrini D."/>
            <person name="Battisti C."/>
            <person name="Pini A."/>
            <person name="Tosetti M."/>
            <person name="Hauser E."/>
            <person name="Masciullo M."/>
            <person name="Di Fabio R."/>
            <person name="Piccolo F."/>
            <person name="Denis E."/>
            <person name="Cioni G."/>
            <person name="Massa R."/>
            <person name="Della Giustina E."/>
            <person name="Calabrese O."/>
            <person name="Melone M.A."/>
            <person name="De Michele G."/>
            <person name="Federico A."/>
            <person name="Bertini E."/>
            <person name="Durr A."/>
            <person name="Brockmann K."/>
            <person name="van der Knaap M.S."/>
            <person name="Zatz M."/>
            <person name="Filla A."/>
            <person name="Brice A."/>
            <person name="Stevanin G."/>
            <person name="Santorelli F.M."/>
        </authorList>
    </citation>
    <scope>VARIANT SPG11 ILE-1349</scope>
</reference>
<reference key="16">
    <citation type="journal article" date="2016" name="Brain">
        <title>ALS5/SPG11/KIAA1840 mutations cause autosomal recessive axonal Charcot-Marie-Tooth disease.</title>
        <authorList>
            <person name="Montecchiani C."/>
            <person name="Pedace L."/>
            <person name="Lo Giudice T."/>
            <person name="Casella A."/>
            <person name="Mearini M."/>
            <person name="Gaudiello F."/>
            <person name="Pedroso J.L."/>
            <person name="Terracciano C."/>
            <person name="Caltagirone C."/>
            <person name="Massa R."/>
            <person name="St George-Hyslop P.H."/>
            <person name="Barsottini O.G."/>
            <person name="Kawarai T."/>
            <person name="Orlacchio A."/>
        </authorList>
    </citation>
    <scope>INVOLVEMENT IN CMT2X</scope>
</reference>
<reference key="17">
    <citation type="journal article" date="2016" name="Brain">
        <title>Genetic and phenotypic characterization of complex hereditary spastic paraplegia.</title>
        <authorList>
            <person name="Kara E."/>
            <person name="Tucci A."/>
            <person name="Manzoni C."/>
            <person name="Lynch D.S."/>
            <person name="Elpidorou M."/>
            <person name="Bettencourt C."/>
            <person name="Chelban V."/>
            <person name="Manole A."/>
            <person name="Hamed S.A."/>
            <person name="Haridy N.A."/>
            <person name="Federoff M."/>
            <person name="Preza E."/>
            <person name="Hughes D."/>
            <person name="Pittman A."/>
            <person name="Jaunmuktane Z."/>
            <person name="Brandner S."/>
            <person name="Xiromerisiou G."/>
            <person name="Wiethoff S."/>
            <person name="Schottlaender L."/>
            <person name="Proukakis C."/>
            <person name="Morris H."/>
            <person name="Warner T."/>
            <person name="Bhatia K.P."/>
            <person name="Korlipara L.V."/>
            <person name="Singleton A.B."/>
            <person name="Hardy J."/>
            <person name="Wood N.W."/>
            <person name="Lewis P.A."/>
            <person name="Houlden H."/>
        </authorList>
    </citation>
    <scope>VARIANTS SPG11 LEU-412; LEU-1208; ASP-1270; ILE-2298 DEL; PRO-2300 AND PRO-2334</scope>
</reference>
<protein>
    <recommendedName>
        <fullName>Spatacsin</fullName>
    </recommendedName>
    <alternativeName>
        <fullName>Colorectal carcinoma-associated protein</fullName>
    </alternativeName>
    <alternativeName>
        <fullName>Spastic paraplegia 11 protein</fullName>
    </alternativeName>
</protein>
<comment type="function">
    <text evidence="9">May play a role in neurite plasticity by maintaining cytoskeleton stability and regulating synaptic vesicle transport.</text>
</comment>
<comment type="subunit">
    <text evidence="8">Interacts with AP5Z1, AP5B1, AP5S1 and ZFYVE26.</text>
</comment>
<comment type="interaction">
    <interactant intactId="EBI-2822128">
        <id>Q96JI7</id>
    </interactant>
    <interactant intactId="EBI-713135">
        <id>Q05193</id>
        <label>DNM1</label>
    </interactant>
    <organismsDiffer>false</organismsDiffer>
    <experiments>3</experiments>
</comment>
<comment type="interaction">
    <interactant intactId="EBI-2822128">
        <id>Q96JI7</id>
    </interactant>
    <interactant intactId="EBI-748621">
        <id>Q9UJW9</id>
        <label>SERTAD3</label>
    </interactant>
    <organismsDiffer>false</organismsDiffer>
    <experiments>3</experiments>
</comment>
<comment type="interaction">
    <interactant intactId="EBI-2822128">
        <id>Q96JI7</id>
    </interactant>
    <interactant intactId="EBI-359815">
        <id>P31946</id>
        <label>YWHAB</label>
    </interactant>
    <organismsDiffer>false</organismsDiffer>
    <experiments>2</experiments>
</comment>
<comment type="interaction">
    <interactant intactId="EBI-2822128">
        <id>Q96JI7</id>
    </interactant>
    <interactant intactId="EBI-356498">
        <id>P62258</id>
        <label>YWHAE</label>
    </interactant>
    <organismsDiffer>false</organismsDiffer>
    <experiments>2</experiments>
</comment>
<comment type="interaction">
    <interactant intactId="EBI-2822128">
        <id>Q96JI7</id>
    </interactant>
    <interactant intactId="EBI-359832">
        <id>P61981</id>
        <label>YWHAG</label>
    </interactant>
    <organismsDiffer>false</organismsDiffer>
    <experiments>2</experiments>
</comment>
<comment type="interaction">
    <interactant intactId="EBI-2822128">
        <id>Q96JI7</id>
    </interactant>
    <interactant intactId="EBI-306940">
        <id>Q04917</id>
        <label>YWHAH</label>
    </interactant>
    <organismsDiffer>false</organismsDiffer>
    <experiments>3</experiments>
</comment>
<comment type="interaction">
    <interactant intactId="EBI-2822128">
        <id>Q96JI7</id>
    </interactant>
    <interactant intactId="EBI-359854">
        <id>P27348</id>
        <label>YWHAQ</label>
    </interactant>
    <organismsDiffer>false</organismsDiffer>
    <experiments>2</experiments>
</comment>
<comment type="interaction">
    <interactant intactId="EBI-2822128">
        <id>Q96JI7</id>
    </interactant>
    <interactant intactId="EBI-347088">
        <id>P63104</id>
        <label>YWHAZ</label>
    </interactant>
    <organismsDiffer>false</organismsDiffer>
    <experiments>2</experiments>
</comment>
<comment type="subcellular location">
    <subcellularLocation>
        <location evidence="4">Cytoplasm</location>
        <location evidence="4">Cytosol</location>
    </subcellularLocation>
    <subcellularLocation>
        <location evidence="4">Nucleus</location>
    </subcellularLocation>
    <subcellularLocation>
        <location evidence="9">Cell projection</location>
        <location evidence="9">Axon</location>
    </subcellularLocation>
    <subcellularLocation>
        <location evidence="9">Cell projection</location>
        <location evidence="9">Dendrite</location>
    </subcellularLocation>
    <text evidence="4">Mainly cytoplasmic.</text>
</comment>
<comment type="alternative products">
    <event type="alternative splicing"/>
    <isoform>
        <id>Q96JI7-1</id>
        <name>1</name>
        <sequence type="displayed"/>
    </isoform>
    <isoform>
        <id>Q96JI7-2</id>
        <name>2</name>
        <sequence type="described" ref="VSP_025483 VSP_025484"/>
    </isoform>
    <isoform>
        <id>Q96JI7-3</id>
        <name>3</name>
        <sequence type="described" ref="VSP_045347"/>
    </isoform>
</comment>
<comment type="tissue specificity">
    <text evidence="4 9">Expressed in all structures of brain, with a high expression in cerebellum. Expressed in cortical projection neurons.</text>
</comment>
<comment type="disease" evidence="4 5 6 11">
    <disease id="DI-01045">
        <name>Spastic paraplegia 11, autosomal recessive</name>
        <acronym>SPG11</acronym>
        <description>A form of spastic paraplegia, a neurodegenerative disorder characterized by a slow, gradual, progressive weakness and spasticity of the lower limbs. Rate of progression and the severity of symptoms are quite variable. Initial symptoms may include difficulty with balance, weakness and stiffness in the legs, muscle spasms, and dragging the toes when walking. In some forms of the disorder, bladder symptoms (such as incontinence) may appear, or the weakness and stiffness may spread to other parts of the body.</description>
        <dbReference type="MIM" id="604360"/>
    </disease>
    <text>The disease is caused by variants affecting the gene represented in this entry.</text>
</comment>
<comment type="disease" evidence="7">
    <disease id="DI-04565">
        <name>Amyotrophic lateral sclerosis 5, juvenile</name>
        <acronym>ALS5</acronym>
        <description>A form of amyotrophic lateral sclerosis, a neurodegenerative disorder affecting upper motor neurons in the brain and lower motor neurons in the brain stem and spinal cord, resulting in fatal paralysis. Sensory abnormalities are absent. The pathologic hallmarks of the disease include pallor of the corticospinal tract due to loss of motor neurons, presence of ubiquitin-positive inclusions within surviving motor neurons, and deposition of pathologic aggregates. The etiology of amyotrophic lateral sclerosis is likely to be multifactorial, involving both genetic and environmental factors. The disease is inherited in 5-10% of the cases. ALS5 is an autosomal recessive, juvenile form characterized by onset of upper and lower motor neuron signs before age 25.</description>
        <dbReference type="MIM" id="602099"/>
    </disease>
    <text>The disease is caused by variants affecting the gene represented in this entry.</text>
</comment>
<comment type="disease" evidence="10">
    <disease id="DI-04588">
        <name>Charcot-Marie-Tooth disease, axonal, type 2X</name>
        <acronym>CMT2X</acronym>
        <description>An autosomal recessive, axonal form of Charcot-Marie-Tooth disease, a disorder of the peripheral nervous system, characterized by progressive weakness and atrophy, initially of the peroneal muscles and later of the distal muscles of the arms. Charcot-Marie-Tooth disease is classified in two main groups on the basis of electrophysiologic properties and histopathology: primary peripheral demyelinating neuropathies (designated CMT1 when they are dominantly inherited) and primary peripheral axonal neuropathies (CMT2). Neuropathies of the CMT2 group are characterized by signs of axonal degeneration in the absence of obvious myelin alterations, normal or slightly reduced nerve conduction velocities, and progressive distal muscle weakness and atrophy. CMT2X patients manifest a slowly progressive, peripheral neuropathy affecting the lower limbs and resulting in gait difficulties and distal sensory impairment. Some patients also have upper limb involvement.</description>
        <dbReference type="MIM" id="616668"/>
    </disease>
    <text>The disease is caused by variants affecting the gene represented in this entry.</text>
</comment>
<comment type="sequence caution" evidence="14">
    <conflict type="erroneous initiation">
        <sequence resource="EMBL-CDS" id="AAH24161"/>
    </conflict>
    <text>Extended N-terminus.</text>
</comment>
<comment type="sequence caution" evidence="14">
    <conflict type="erroneous initiation">
        <sequence resource="EMBL-CDS" id="AAX54692"/>
    </conflict>
    <text>Truncated N-terminus.</text>
</comment>
<comment type="sequence caution" evidence="14">
    <conflict type="erroneous initiation">
        <sequence resource="EMBL-CDS" id="BAB15065"/>
    </conflict>
    <text>Extended N-terminus.</text>
</comment>
<comment type="sequence caution" evidence="14">
    <conflict type="erroneous initiation">
        <sequence resource="EMBL-CDS" id="BAC03600"/>
    </conflict>
    <text>Truncated N-terminus.</text>
</comment>
<organism>
    <name type="scientific">Homo sapiens</name>
    <name type="common">Human</name>
    <dbReference type="NCBI Taxonomy" id="9606"/>
    <lineage>
        <taxon>Eukaryota</taxon>
        <taxon>Metazoa</taxon>
        <taxon>Chordata</taxon>
        <taxon>Craniata</taxon>
        <taxon>Vertebrata</taxon>
        <taxon>Euteleostomi</taxon>
        <taxon>Mammalia</taxon>
        <taxon>Eutheria</taxon>
        <taxon>Euarchontoglires</taxon>
        <taxon>Primates</taxon>
        <taxon>Haplorrhini</taxon>
        <taxon>Catarrhini</taxon>
        <taxon>Hominidae</taxon>
        <taxon>Homo</taxon>
    </lineage>
</organism>
<feature type="chain" id="PRO_0000287467" description="Spatacsin">
    <location>
        <begin position="1"/>
        <end position="2443"/>
    </location>
</feature>
<feature type="modified residue" description="Phosphoserine" evidence="1">
    <location>
        <position position="1955"/>
    </location>
</feature>
<feature type="splice variant" id="VSP_045347" description="In isoform 3." evidence="13">
    <original>TSSLDSQKFVTVPSSNEVVTNLEVLTSKCLHGKNYCRQVLCLYDLAKELGCSYTDVAAQDGEAMLRKILASQQPDRCKRAQAFISTQGLKPDTVAELVAEEVTRELLTSSQGTG</original>
    <variation>R</variation>
    <location>
        <begin position="1956"/>
        <end position="2069"/>
    </location>
</feature>
<feature type="splice variant" id="VSP_025483" description="In isoform 2." evidence="12">
    <original>HKQMFNPTEE</original>
    <variation>ALPPGDSQPL</variation>
    <location>
        <begin position="2070"/>
        <end position="2079"/>
    </location>
</feature>
<feature type="splice variant" id="VSP_025484" description="In isoform 2." evidence="12">
    <location>
        <begin position="2080"/>
        <end position="2443"/>
    </location>
</feature>
<feature type="sequence variant" id="VAR_032307" description="In dbSNP:rs3759875.">
    <original>Y</original>
    <variation>C</variation>
    <location>
        <position position="396"/>
    </location>
</feature>
<feature type="sequence variant" id="VAR_078057" description="In SPG11; uncertain significance; dbSNP:rs312262723." evidence="11">
    <original>S</original>
    <variation>L</variation>
    <location>
        <position position="412"/>
    </location>
</feature>
<feature type="sequence variant" id="VAR_032308" description="In dbSNP:rs3759871." evidence="2 3">
    <original>F</original>
    <variation>S</variation>
    <location>
        <position position="463"/>
    </location>
</feature>
<feature type="sequence variant" id="VAR_078058" description="In SPG11; uncertain significance; dbSNP:rs779830116." evidence="11">
    <original>P</original>
    <variation>L</variation>
    <location>
        <position position="1208"/>
    </location>
</feature>
<feature type="sequence variant" id="VAR_078059" description="In SPG11; uncertain significance; dbSNP:rs1555451521." evidence="11">
    <original>V</original>
    <variation>D</variation>
    <location>
        <position position="1270"/>
    </location>
</feature>
<feature type="sequence variant" id="VAR_058417" description="In SPG11; dbSNP:rs1567149547." evidence="6">
    <original>F</original>
    <variation>I</variation>
    <location>
        <position position="1349"/>
    </location>
</feature>
<feature type="sequence variant" id="VAR_078060" description="In SPG11; uncertain significance." evidence="11">
    <location>
        <position position="2298"/>
    </location>
</feature>
<feature type="sequence variant" id="VAR_078061" description="In SPG11; uncertain significance; dbSNP:rs371334506." evidence="11">
    <original>L</original>
    <variation>P</variation>
    <location>
        <position position="2300"/>
    </location>
</feature>
<feature type="sequence variant" id="VAR_078062" description="In SPG11; uncertain significance; dbSNP:rs764647588." evidence="11">
    <original>A</original>
    <variation>P</variation>
    <location>
        <position position="2334"/>
    </location>
</feature>
<feature type="sequence conflict" description="In Ref. 5; CAH10686." evidence="14" ref="5">
    <original>N</original>
    <variation>K</variation>
    <location>
        <position position="1205"/>
    </location>
</feature>
<feature type="sequence conflict" description="In Ref. 6; BAC03600." evidence="14" ref="6">
    <original>R</original>
    <variation>G</variation>
    <location>
        <position position="1674"/>
    </location>
</feature>
<feature type="sequence conflict" description="In Ref. 4; AAI50641." evidence="14" ref="4">
    <original>E</original>
    <variation>D</variation>
    <location>
        <position position="2171"/>
    </location>
</feature>
<feature type="sequence conflict" description="In Ref. 4; AAH94704." evidence="14" ref="4">
    <original>D</original>
    <variation>G</variation>
    <location>
        <position position="2253"/>
    </location>
</feature>
<feature type="sequence conflict" description="In Ref. 6; BAB15065." evidence="14" ref="6">
    <original>F</original>
    <variation>L</variation>
    <location>
        <position position="2378"/>
    </location>
</feature>
<proteinExistence type="evidence at protein level"/>
<accession>Q96JI7</accession>
<accession>A8KAX9</accession>
<accession>B9EK60</accession>
<accession>F5H3N6</accession>
<accession>Q4VC11</accession>
<accession>Q58G86</accession>
<accession>Q69YG6</accession>
<accession>Q6NW01</accession>
<accession>Q8N270</accession>
<accession>Q8TBU9</accession>
<accession>Q9H734</accession>
<name>SPTCS_HUMAN</name>
<gene>
    <name type="primary">SPG11</name>
    <name type="synonym">KIAA1840</name>
</gene>
<sequence length="2443" mass="278868">MAAEEGVASAASAGGSWGTAAMGRVLPMLLVPVPAEAMGQLGSRAQLRTQPEALGSLTAAGSLQVLSLTPGSRGGGRCCLEGPFWHFLWEDSRNSSTPTEKPKLLALGENYELLIYEFNLKDGRCDATILYSCSREALQKLIDDQDISISLLSLRILSFHNNTSLLFINKCVILHIIFPERDAAIRVLNCFTLPLPAQAVDMIIDTQLCRGILFVLSSLGWIYIFDVVDGTYVAHVDLALHKEDMCNEQQQEPAKISSFTSLKVSQDLDVAVIVSSSNSAVALNLNLYFRQHPGHLLCERILEDLPIQGPKGVDEDDPVNSAYNMKLAKFSFQIDRSWKAQLSSLNETIKNSKLEVSCCAPWFQDILHLESPESGNHSTSVQSWAFIPQDIMHGQYNVLQKDHAKTSDPGRSWKIMHISEQEEPIELKCVSVTGFTALFTWEVERMGYTITLWDLETQGMQCFSLGTKCIPVDSSGDQQLCFVLTENGLSLILFGLTQEEFLNRLMIHGSASTVDTLCHLNGWGRCSIPIHALEAGIENRQLDTVNFFLKSKENLFNPSSKSSVSDQFDHLSSHLYLRNVEELIPALDLLCSAIRESYSEPQSKHFSEQLLNLTLSFLNNQIKELFIHTEELDEHLQKGVNILTSYINELRTFMIKFPWKLTDAIDEYDVHENVPKVKESNIWKKLSFEEVIASAILNNKIPEAQTFFRIDSHSAQKLEELIGIGLNLVFDNLKKNNIKEASELLKNMGFDVKGQLLKICFYTTNKNIRDFLVEILKEKNYFSEKEKRTIDFVHQVEKLYLGHFQENMQIQSFPRYWIKEQDFFKHKSVLDSFLKYDCKDEFNKQDHRIVLNWALWWDQLTQESILLPRISPEEYKSYSPEALWRYLTARHDWLNIILWIGEFQTQHSYASLQQNKWPLLTVDVINQNTSCNNYMRNEILDKLARNGVFLASELEDFECFLLRLSRIGGVIQDTLPVQNYKTKEGWDFHSQFILYCLEHSLQHLLYVYLDCYKLSPENCPFLEKKELHEAHPWFEFLVQCRQVASNLTDPKLIFQASLANAQILIPTNQASVSSMLLEGHTLLALATTMYSPGGVSQVVQNEENENCLKKVDPQLLKMALTPYPKLKTALFPQCTPPSVLPSDITIYHLIQSLSPFDPSRLFGWQSANTLAIGDAWSHLPHFSSPDLVNKYAIVERLNFAYYLHNGRPSFAFGTFLVQELIKSKTPKQLIQQVGNEAYVIGLSSFHIPSIGAACVCFLELLGLDSLKLRVDMKVANIILSYKCRNEDAQYSFIRESVAEKLSKLADGEKTTTEELLVLLEEGTWNSIQQQEIKRLSSESSSQWALVVQFCRLHNMKLSISYLRECAKANDWLQFIIHSQLHNYHPAEVKSLIQYFSPVIQDHLRLAFENLPSVPTSKMDSDQVCNKCPQELQGSKQEMTDLFEILLQCSEEPDSWHWLLVEAVKQQAPILSVLASCLQGASAISCLCVWIITSVEDNVATEAMGHIQDSTEDHTWNLEDLSVIWRTLLTRQKSKTLIRGFQLFFKDSPLLLVMEMYELCMFFRNYKEAEAKLLEFQKSLETLNTAATKVHPVIPAMWLEDQVCFLLKLMLQQCKTQYELGKLLQLFVEREHLFSDGPDVKKLCILCQILKDTSIAINHTIITSYSIENLQHECRSILERLQTDGQFALARRVAELAELPVDNLVIKEITQEMQTLKHIEQWSLKQARIDFWKKCHENFKKNSISSKAASSFFSTQAHVACEHPTGWSSMEERHLLLTLAGHWLAQEDVVPLDKLEELEKQIWLCRITQHTLGRNQEETEPRFSRQISTSGELSFDSLASEFSFSKLAALNTSKYLELNSLPSKETCENRLDWKEQESLNFLIGRLLDDGCVHEASRVCRYFHFYNPDVALVLHCRALASGEASMEDLHPEIHALLQSAELLEEEAPDIPLRRVHSTSSLDSQKFVTVPSSNEVVTNLEVLTSKCLHGKNYCRQVLCLYDLAKELGCSYTDVAAQDGEAMLRKILASQQPDRCKRAQAFISTQGLKPDTVAELVAEEVTRELLTSSQGTGHKQMFNPTEESQTFLQLTTLCQDRTLVGMKLLDKISSVPHGELSCTTELLILAHHCFTLTCHMEGIIRVLQAAHMLTDNHLAPSEEYGLVVRLLTGIGRYNEMTYIFDLLHKKHYFEVLMRKKLDPSGTLKTALLDYIKRCRPGDSEKHNMIALCFSMCREIGENHEAAARIQLKLIESQPWEDSLKDGHQLKQLLLKALTLMLDAAESYAKDSCVRQAQHCQRLTKLITLQIHFLNTGQNTMLINLGRHKLMDCILALPRFYQASIVAEAYDFVPDWAEILYQQVILKGDFNYLEEFKQQRLLKSSIFEEISKKYKQHQPTDMVMENLKKLLTYCEDVYLYYKLAYEHKFYEIVNVLLKDPQTGCCLKDMLAG</sequence>
<dbReference type="EMBL" id="AB058743">
    <property type="protein sequence ID" value="BAB47469.2"/>
    <property type="molecule type" value="mRNA"/>
</dbReference>
<dbReference type="EMBL" id="AC009996">
    <property type="status" value="NOT_ANNOTATED_CDS"/>
    <property type="molecule type" value="Genomic_DNA"/>
</dbReference>
<dbReference type="EMBL" id="BC024161">
    <property type="protein sequence ID" value="AAH24161.2"/>
    <property type="status" value="ALT_INIT"/>
    <property type="molecule type" value="mRNA"/>
</dbReference>
<dbReference type="EMBL" id="BC067798">
    <property type="protein sequence ID" value="AAH67798.1"/>
    <property type="molecule type" value="mRNA"/>
</dbReference>
<dbReference type="EMBL" id="BC094704">
    <property type="protein sequence ID" value="AAH94704.1"/>
    <property type="molecule type" value="mRNA"/>
</dbReference>
<dbReference type="EMBL" id="BC150640">
    <property type="protein sequence ID" value="AAI50641.1"/>
    <property type="molecule type" value="mRNA"/>
</dbReference>
<dbReference type="EMBL" id="BC153879">
    <property type="protein sequence ID" value="AAI53880.1"/>
    <property type="molecule type" value="mRNA"/>
</dbReference>
<dbReference type="EMBL" id="AL834168">
    <property type="protein sequence ID" value="CAH10686.1"/>
    <property type="molecule type" value="mRNA"/>
</dbReference>
<dbReference type="EMBL" id="AK025092">
    <property type="protein sequence ID" value="BAB15065.1"/>
    <property type="status" value="ALT_INIT"/>
    <property type="molecule type" value="mRNA"/>
</dbReference>
<dbReference type="EMBL" id="AK091176">
    <property type="protein sequence ID" value="BAC03600.1"/>
    <property type="status" value="ALT_INIT"/>
    <property type="molecule type" value="mRNA"/>
</dbReference>
<dbReference type="EMBL" id="AY954502">
    <property type="protein sequence ID" value="AAX54692.1"/>
    <property type="status" value="ALT_INIT"/>
    <property type="molecule type" value="mRNA"/>
</dbReference>
<dbReference type="CCDS" id="CCDS10112.1">
    <molecule id="Q96JI7-1"/>
</dbReference>
<dbReference type="CCDS" id="CCDS53939.1">
    <molecule id="Q96JI7-3"/>
</dbReference>
<dbReference type="RefSeq" id="NP_001153699.1">
    <molecule id="Q96JI7-3"/>
    <property type="nucleotide sequence ID" value="NM_001160227.2"/>
</dbReference>
<dbReference type="RefSeq" id="NP_079413.3">
    <molecule id="Q96JI7-1"/>
    <property type="nucleotide sequence ID" value="NM_025137.3"/>
</dbReference>
<dbReference type="BioGRID" id="123177">
    <property type="interactions" value="65"/>
</dbReference>
<dbReference type="CORUM" id="Q96JI7"/>
<dbReference type="FunCoup" id="Q96JI7">
    <property type="interactions" value="3533"/>
</dbReference>
<dbReference type="IntAct" id="Q96JI7">
    <property type="interactions" value="208"/>
</dbReference>
<dbReference type="MINT" id="Q96JI7"/>
<dbReference type="STRING" id="9606.ENSP00000261866"/>
<dbReference type="GlyGen" id="Q96JI7">
    <property type="glycosylation" value="2 sites, 1 N-linked glycan (1 site), 1 O-linked glycan (1 site)"/>
</dbReference>
<dbReference type="iPTMnet" id="Q96JI7"/>
<dbReference type="PhosphoSitePlus" id="Q96JI7"/>
<dbReference type="BioMuta" id="SPG11"/>
<dbReference type="DMDM" id="296452946"/>
<dbReference type="jPOST" id="Q96JI7"/>
<dbReference type="MassIVE" id="Q96JI7"/>
<dbReference type="PaxDb" id="9606-ENSP00000261866"/>
<dbReference type="PeptideAtlas" id="Q96JI7"/>
<dbReference type="ProteomicsDB" id="26327"/>
<dbReference type="ProteomicsDB" id="76968">
    <molecule id="Q96JI7-1"/>
</dbReference>
<dbReference type="ProteomicsDB" id="76969">
    <molecule id="Q96JI7-2"/>
</dbReference>
<dbReference type="Pumba" id="Q96JI7"/>
<dbReference type="Antibodypedia" id="11596">
    <property type="antibodies" value="84 antibodies from 22 providers"/>
</dbReference>
<dbReference type="DNASU" id="80208"/>
<dbReference type="Ensembl" id="ENST00000261866.12">
    <molecule id="Q96JI7-1"/>
    <property type="protein sequence ID" value="ENSP00000261866.7"/>
    <property type="gene ID" value="ENSG00000104133.16"/>
</dbReference>
<dbReference type="Ensembl" id="ENST00000535302.6">
    <molecule id="Q96JI7-3"/>
    <property type="protein sequence ID" value="ENSP00000445278.2"/>
    <property type="gene ID" value="ENSG00000104133.16"/>
</dbReference>
<dbReference type="Ensembl" id="ENST00000558319.5">
    <molecule id="Q96JI7-2"/>
    <property type="protein sequence ID" value="ENSP00000453599.1"/>
    <property type="gene ID" value="ENSG00000104133.16"/>
</dbReference>
<dbReference type="GeneID" id="80208"/>
<dbReference type="KEGG" id="hsa:80208"/>
<dbReference type="MANE-Select" id="ENST00000261866.12">
    <property type="protein sequence ID" value="ENSP00000261866.7"/>
    <property type="RefSeq nucleotide sequence ID" value="NM_025137.4"/>
    <property type="RefSeq protein sequence ID" value="NP_079413.3"/>
</dbReference>
<dbReference type="UCSC" id="uc001ztx.4">
    <molecule id="Q96JI7-1"/>
    <property type="organism name" value="human"/>
</dbReference>
<dbReference type="AGR" id="HGNC:11226"/>
<dbReference type="CTD" id="80208"/>
<dbReference type="DisGeNET" id="80208"/>
<dbReference type="GeneCards" id="SPG11"/>
<dbReference type="GeneReviews" id="SPG11"/>
<dbReference type="HGNC" id="HGNC:11226">
    <property type="gene designation" value="SPG11"/>
</dbReference>
<dbReference type="HPA" id="ENSG00000104133">
    <property type="expression patterns" value="Low tissue specificity"/>
</dbReference>
<dbReference type="MalaCards" id="SPG11"/>
<dbReference type="MIM" id="602099">
    <property type="type" value="phenotype"/>
</dbReference>
<dbReference type="MIM" id="604360">
    <property type="type" value="phenotype"/>
</dbReference>
<dbReference type="MIM" id="610844">
    <property type="type" value="gene"/>
</dbReference>
<dbReference type="MIM" id="616668">
    <property type="type" value="phenotype"/>
</dbReference>
<dbReference type="neXtProt" id="NX_Q96JI7"/>
<dbReference type="OpenTargets" id="ENSG00000104133"/>
<dbReference type="Orphanet" id="466775">
    <property type="disease" value="Autosomal recessive Charcot-Marie-Tooth disease type 2X"/>
</dbReference>
<dbReference type="Orphanet" id="2822">
    <property type="disease" value="Autosomal recessive spastic paraplegia type 11"/>
</dbReference>
<dbReference type="Orphanet" id="300605">
    <property type="disease" value="Juvenile amyotrophic lateral sclerosis"/>
</dbReference>
<dbReference type="PharmGKB" id="PA36058"/>
<dbReference type="VEuPathDB" id="HostDB:ENSG00000104133"/>
<dbReference type="eggNOG" id="KOG1884">
    <property type="taxonomic scope" value="Eukaryota"/>
</dbReference>
<dbReference type="GeneTree" id="ENSGT00390000016791"/>
<dbReference type="HOGENOM" id="CLU_001081_0_0_1"/>
<dbReference type="InParanoid" id="Q96JI7"/>
<dbReference type="OMA" id="ACCLNGP"/>
<dbReference type="OrthoDB" id="2018754at2759"/>
<dbReference type="PAN-GO" id="Q96JI7">
    <property type="GO annotations" value="8 GO annotations based on evolutionary models"/>
</dbReference>
<dbReference type="PhylomeDB" id="Q96JI7"/>
<dbReference type="TreeFam" id="TF325171"/>
<dbReference type="PathwayCommons" id="Q96JI7"/>
<dbReference type="SignaLink" id="Q96JI7"/>
<dbReference type="BioGRID-ORCS" id="80208">
    <property type="hits" value="14 hits in 1157 CRISPR screens"/>
</dbReference>
<dbReference type="ChiTaRS" id="SPG11">
    <property type="organism name" value="human"/>
</dbReference>
<dbReference type="GeneWiki" id="SPG11"/>
<dbReference type="GenomeRNAi" id="80208"/>
<dbReference type="Pharos" id="Q96JI7">
    <property type="development level" value="Tbio"/>
</dbReference>
<dbReference type="PRO" id="PR:Q96JI7"/>
<dbReference type="Proteomes" id="UP000005640">
    <property type="component" value="Chromosome 15"/>
</dbReference>
<dbReference type="RNAct" id="Q96JI7">
    <property type="molecule type" value="protein"/>
</dbReference>
<dbReference type="Bgee" id="ENSG00000104133">
    <property type="expression patterns" value="Expressed in bronchial epithelial cell and 205 other cell types or tissues"/>
</dbReference>
<dbReference type="ExpressionAtlas" id="Q96JI7">
    <property type="expression patterns" value="baseline and differential"/>
</dbReference>
<dbReference type="GO" id="GO:0030424">
    <property type="term" value="C:axon"/>
    <property type="evidence" value="ECO:0000318"/>
    <property type="project" value="GO_Central"/>
</dbReference>
<dbReference type="GO" id="GO:0005737">
    <property type="term" value="C:cytoplasm"/>
    <property type="evidence" value="ECO:0000314"/>
    <property type="project" value="MGI"/>
</dbReference>
<dbReference type="GO" id="GO:0031410">
    <property type="term" value="C:cytoplasmic vesicle"/>
    <property type="evidence" value="ECO:0000314"/>
    <property type="project" value="MGI"/>
</dbReference>
<dbReference type="GO" id="GO:0005829">
    <property type="term" value="C:cytosol"/>
    <property type="evidence" value="ECO:0000314"/>
    <property type="project" value="HPA"/>
</dbReference>
<dbReference type="GO" id="GO:0030425">
    <property type="term" value="C:dendrite"/>
    <property type="evidence" value="ECO:0000318"/>
    <property type="project" value="GO_Central"/>
</dbReference>
<dbReference type="GO" id="GO:0005783">
    <property type="term" value="C:endoplasmic reticulum"/>
    <property type="evidence" value="ECO:0007669"/>
    <property type="project" value="Ensembl"/>
</dbReference>
<dbReference type="GO" id="GO:0005765">
    <property type="term" value="C:lysosomal membrane"/>
    <property type="evidence" value="ECO:0007005"/>
    <property type="project" value="UniProtKB"/>
</dbReference>
<dbReference type="GO" id="GO:0005730">
    <property type="term" value="C:nucleolus"/>
    <property type="evidence" value="ECO:0000314"/>
    <property type="project" value="HPA"/>
</dbReference>
<dbReference type="GO" id="GO:0005886">
    <property type="term" value="C:plasma membrane"/>
    <property type="evidence" value="ECO:0000314"/>
    <property type="project" value="HPA"/>
</dbReference>
<dbReference type="GO" id="GO:0045202">
    <property type="term" value="C:synapse"/>
    <property type="evidence" value="ECO:0000314"/>
    <property type="project" value="UniProtKB"/>
</dbReference>
<dbReference type="GO" id="GO:0019901">
    <property type="term" value="F:protein kinase binding"/>
    <property type="evidence" value="ECO:0000314"/>
    <property type="project" value="MGI"/>
</dbReference>
<dbReference type="GO" id="GO:1905037">
    <property type="term" value="P:autophagosome organization"/>
    <property type="evidence" value="ECO:0000314"/>
    <property type="project" value="MGI"/>
</dbReference>
<dbReference type="GO" id="GO:0008088">
    <property type="term" value="P:axo-dendritic transport"/>
    <property type="evidence" value="ECO:0000315"/>
    <property type="project" value="UniProtKB"/>
</dbReference>
<dbReference type="GO" id="GO:0048675">
    <property type="term" value="P:axon extension"/>
    <property type="evidence" value="ECO:0007669"/>
    <property type="project" value="Ensembl"/>
</dbReference>
<dbReference type="GO" id="GO:0007409">
    <property type="term" value="P:axonogenesis"/>
    <property type="evidence" value="ECO:0000318"/>
    <property type="project" value="GO_Central"/>
</dbReference>
<dbReference type="GO" id="GO:0007268">
    <property type="term" value="P:chemical synaptic transmission"/>
    <property type="evidence" value="ECO:0000315"/>
    <property type="project" value="UniProtKB"/>
</dbReference>
<dbReference type="GO" id="GO:0033344">
    <property type="term" value="P:cholesterol efflux"/>
    <property type="evidence" value="ECO:0007669"/>
    <property type="project" value="Ensembl"/>
</dbReference>
<dbReference type="GO" id="GO:0021957">
    <property type="term" value="P:corticospinal tract morphogenesis"/>
    <property type="evidence" value="ECO:0007669"/>
    <property type="project" value="Ensembl"/>
</dbReference>
<dbReference type="GO" id="GO:0051668">
    <property type="term" value="P:localization within membrane"/>
    <property type="evidence" value="ECO:0007669"/>
    <property type="project" value="Ensembl"/>
</dbReference>
<dbReference type="GO" id="GO:0007040">
    <property type="term" value="P:lysosome organization"/>
    <property type="evidence" value="ECO:0000314"/>
    <property type="project" value="MGI"/>
</dbReference>
<dbReference type="GO" id="GO:0007613">
    <property type="term" value="P:memory"/>
    <property type="evidence" value="ECO:0007669"/>
    <property type="project" value="Ensembl"/>
</dbReference>
<dbReference type="GO" id="GO:0061744">
    <property type="term" value="P:motor behavior"/>
    <property type="evidence" value="ECO:0007669"/>
    <property type="project" value="Ensembl"/>
</dbReference>
<dbReference type="GO" id="GO:0097049">
    <property type="term" value="P:motor neuron apoptotic process"/>
    <property type="evidence" value="ECO:0007669"/>
    <property type="project" value="Ensembl"/>
</dbReference>
<dbReference type="GO" id="GO:0007528">
    <property type="term" value="P:neuromuscular junction development"/>
    <property type="evidence" value="ECO:0007669"/>
    <property type="project" value="Ensembl"/>
</dbReference>
<dbReference type="GO" id="GO:0090389">
    <property type="term" value="P:phagosome-lysosome fusion involved in apoptotic cell clearance"/>
    <property type="evidence" value="ECO:0007669"/>
    <property type="project" value="Ensembl"/>
</dbReference>
<dbReference type="GO" id="GO:0030163">
    <property type="term" value="P:protein catabolic process"/>
    <property type="evidence" value="ECO:0007669"/>
    <property type="project" value="Ensembl"/>
</dbReference>
<dbReference type="GO" id="GO:0006606">
    <property type="term" value="P:protein import into nucleus"/>
    <property type="evidence" value="ECO:0007669"/>
    <property type="project" value="Ensembl"/>
</dbReference>
<dbReference type="GO" id="GO:2001256">
    <property type="term" value="P:regulation of store-operated calcium entry"/>
    <property type="evidence" value="ECO:0007669"/>
    <property type="project" value="Ensembl"/>
</dbReference>
<dbReference type="GO" id="GO:0048741">
    <property type="term" value="P:skeletal muscle fiber development"/>
    <property type="evidence" value="ECO:0007669"/>
    <property type="project" value="Ensembl"/>
</dbReference>
<dbReference type="GO" id="GO:0048489">
    <property type="term" value="P:synaptic vesicle transport"/>
    <property type="evidence" value="ECO:0000315"/>
    <property type="project" value="UniProtKB"/>
</dbReference>
<dbReference type="GO" id="GO:0047496">
    <property type="term" value="P:vesicle transport along microtubule"/>
    <property type="evidence" value="ECO:0007669"/>
    <property type="project" value="Ensembl"/>
</dbReference>
<dbReference type="GO" id="GO:0090659">
    <property type="term" value="P:walking behavior"/>
    <property type="evidence" value="ECO:0007669"/>
    <property type="project" value="Ensembl"/>
</dbReference>
<dbReference type="InterPro" id="IPR028103">
    <property type="entry name" value="Spatacsin"/>
</dbReference>
<dbReference type="InterPro" id="IPR028107">
    <property type="entry name" value="Spatacsin_C_dom"/>
</dbReference>
<dbReference type="PANTHER" id="PTHR13650">
    <property type="entry name" value="SPATACSIN"/>
    <property type="match status" value="1"/>
</dbReference>
<dbReference type="PANTHER" id="PTHR13650:SF0">
    <property type="entry name" value="SPATACSIN"/>
    <property type="match status" value="1"/>
</dbReference>
<dbReference type="Pfam" id="PF14649">
    <property type="entry name" value="Spatacsin_C"/>
    <property type="match status" value="1"/>
</dbReference>
<evidence type="ECO:0000250" key="1">
    <source>
        <dbReference type="UniProtKB" id="Q3UHA3"/>
    </source>
</evidence>
<evidence type="ECO:0000269" key="2">
    <source>
    </source>
</evidence>
<evidence type="ECO:0000269" key="3">
    <source>
    </source>
</evidence>
<evidence type="ECO:0000269" key="4">
    <source>
    </source>
</evidence>
<evidence type="ECO:0000269" key="5">
    <source>
    </source>
</evidence>
<evidence type="ECO:0000269" key="6">
    <source>
    </source>
</evidence>
<evidence type="ECO:0000269" key="7">
    <source>
    </source>
</evidence>
<evidence type="ECO:0000269" key="8">
    <source>
    </source>
</evidence>
<evidence type="ECO:0000269" key="9">
    <source>
    </source>
</evidence>
<evidence type="ECO:0000269" key="10">
    <source>
    </source>
</evidence>
<evidence type="ECO:0000269" key="11">
    <source>
    </source>
</evidence>
<evidence type="ECO:0000303" key="12">
    <source>
    </source>
</evidence>
<evidence type="ECO:0000303" key="13">
    <source>
    </source>
</evidence>
<evidence type="ECO:0000305" key="14"/>